<organism>
    <name type="scientific">Mus musculus</name>
    <name type="common">Mouse</name>
    <dbReference type="NCBI Taxonomy" id="10090"/>
    <lineage>
        <taxon>Eukaryota</taxon>
        <taxon>Metazoa</taxon>
        <taxon>Chordata</taxon>
        <taxon>Craniata</taxon>
        <taxon>Vertebrata</taxon>
        <taxon>Euteleostomi</taxon>
        <taxon>Mammalia</taxon>
        <taxon>Eutheria</taxon>
        <taxon>Euarchontoglires</taxon>
        <taxon>Glires</taxon>
        <taxon>Rodentia</taxon>
        <taxon>Myomorpha</taxon>
        <taxon>Muroidea</taxon>
        <taxon>Muridae</taxon>
        <taxon>Murinae</taxon>
        <taxon>Mus</taxon>
        <taxon>Mus</taxon>
    </lineage>
</organism>
<gene>
    <name evidence="13" type="primary">Trip4</name>
</gene>
<protein>
    <recommendedName>
        <fullName evidence="10">Activating signal cointegrator 1</fullName>
        <shortName evidence="10">ASC-1</shortName>
    </recommendedName>
    <alternativeName>
        <fullName evidence="12">Thyroid receptor-interacting protein 4</fullName>
        <shortName evidence="12">TR-interacting protein 4</shortName>
        <shortName evidence="12">TRIP-4</shortName>
    </alternativeName>
</protein>
<accession>Q9QXN3</accession>
<accession>E9QK64</accession>
<accession>Q8CAD5</accession>
<dbReference type="EMBL" id="AF197574">
    <property type="protein sequence ID" value="AAF18440.1"/>
    <property type="molecule type" value="mRNA"/>
</dbReference>
<dbReference type="EMBL" id="AF539614">
    <property type="protein sequence ID" value="AAN23117.1"/>
    <property type="molecule type" value="mRNA"/>
</dbReference>
<dbReference type="EMBL" id="AK039024">
    <property type="protein sequence ID" value="BAC30209.1"/>
    <property type="molecule type" value="mRNA"/>
</dbReference>
<dbReference type="EMBL" id="AC151906">
    <property type="status" value="NOT_ANNOTATED_CDS"/>
    <property type="molecule type" value="Genomic_DNA"/>
</dbReference>
<dbReference type="EMBL" id="BC021316">
    <property type="protein sequence ID" value="AAH21316.1"/>
    <property type="molecule type" value="mRNA"/>
</dbReference>
<dbReference type="CCDS" id="CCDS23298.1">
    <molecule id="Q9QXN3-1"/>
</dbReference>
<dbReference type="CCDS" id="CCDS52838.1">
    <molecule id="Q9QXN3-2"/>
</dbReference>
<dbReference type="RefSeq" id="NP_001164378.1">
    <molecule id="Q9QXN3-2"/>
    <property type="nucleotide sequence ID" value="NM_001170907.2"/>
</dbReference>
<dbReference type="RefSeq" id="NP_001344801.1">
    <molecule id="Q9QXN3-1"/>
    <property type="nucleotide sequence ID" value="NM_001357872.2"/>
</dbReference>
<dbReference type="RefSeq" id="NP_001420662.1">
    <molecule id="Q9QXN3-1"/>
    <property type="nucleotide sequence ID" value="NM_001433733.1"/>
</dbReference>
<dbReference type="RefSeq" id="NP_001420663.1">
    <molecule id="Q9QXN3-1"/>
    <property type="nucleotide sequence ID" value="NM_001433734.1"/>
</dbReference>
<dbReference type="RefSeq" id="NP_001420664.1">
    <molecule id="Q9QXN3-2"/>
    <property type="nucleotide sequence ID" value="NM_001433735.1"/>
</dbReference>
<dbReference type="RefSeq" id="NP_001420665.1">
    <molecule id="Q9QXN3-1"/>
    <property type="nucleotide sequence ID" value="NM_001433736.1"/>
</dbReference>
<dbReference type="RefSeq" id="NP_062771.2">
    <molecule id="Q9QXN3-1"/>
    <property type="nucleotide sequence ID" value="NM_019797.5"/>
</dbReference>
<dbReference type="RefSeq" id="XP_006511359.1">
    <property type="nucleotide sequence ID" value="XM_006511296.3"/>
</dbReference>
<dbReference type="RefSeq" id="XP_006511361.1">
    <property type="nucleotide sequence ID" value="XM_006511298.3"/>
</dbReference>
<dbReference type="RefSeq" id="XP_006511362.1">
    <property type="nucleotide sequence ID" value="XM_006511299.3"/>
</dbReference>
<dbReference type="RefSeq" id="XP_017168981.1">
    <property type="nucleotide sequence ID" value="XM_017313492.1"/>
</dbReference>
<dbReference type="RefSeq" id="XP_017168982.1">
    <property type="nucleotide sequence ID" value="XM_017313493.1"/>
</dbReference>
<dbReference type="RefSeq" id="XP_036011036.1">
    <molecule id="Q9QXN3-2"/>
    <property type="nucleotide sequence ID" value="XM_036155143.1"/>
</dbReference>
<dbReference type="SMR" id="Q9QXN3"/>
<dbReference type="BioGRID" id="207956">
    <property type="interactions" value="5"/>
</dbReference>
<dbReference type="FunCoup" id="Q9QXN3">
    <property type="interactions" value="2634"/>
</dbReference>
<dbReference type="IntAct" id="Q9QXN3">
    <property type="interactions" value="3"/>
</dbReference>
<dbReference type="STRING" id="10090.ENSMUSP00000112385"/>
<dbReference type="iPTMnet" id="Q9QXN3"/>
<dbReference type="PhosphoSitePlus" id="Q9QXN3"/>
<dbReference type="PaxDb" id="10090-ENSMUSP00000112385"/>
<dbReference type="ProteomicsDB" id="298312">
    <molecule id="Q9QXN3-1"/>
</dbReference>
<dbReference type="ProteomicsDB" id="298313">
    <molecule id="Q9QXN3-2"/>
</dbReference>
<dbReference type="Pumba" id="Q9QXN3"/>
<dbReference type="Antibodypedia" id="1761">
    <property type="antibodies" value="279 antibodies from 33 providers"/>
</dbReference>
<dbReference type="DNASU" id="56404"/>
<dbReference type="Ensembl" id="ENSMUST00000117083.2">
    <molecule id="Q9QXN3-1"/>
    <property type="protein sequence ID" value="ENSMUSP00000113949.2"/>
    <property type="gene ID" value="ENSMUSG00000032386.16"/>
</dbReference>
<dbReference type="Ensembl" id="ENSMUST00000119245.8">
    <molecule id="Q9QXN3-1"/>
    <property type="protein sequence ID" value="ENSMUSP00000112385.2"/>
    <property type="gene ID" value="ENSMUSG00000032386.16"/>
</dbReference>
<dbReference type="Ensembl" id="ENSMUST00000122410.8">
    <molecule id="Q9QXN3-2"/>
    <property type="protein sequence ID" value="ENSMUSP00000112866.2"/>
    <property type="gene ID" value="ENSMUSG00000032386.16"/>
</dbReference>
<dbReference type="Ensembl" id="ENSMUST00000179395.8">
    <molecule id="Q9QXN3-2"/>
    <property type="protein sequence ID" value="ENSMUSP00000137304.2"/>
    <property type="gene ID" value="ENSMUSG00000032386.16"/>
</dbReference>
<dbReference type="GeneID" id="56404"/>
<dbReference type="KEGG" id="mmu:56404"/>
<dbReference type="UCSC" id="uc009qdz.2">
    <molecule id="Q9QXN3-2"/>
    <property type="organism name" value="mouse"/>
</dbReference>
<dbReference type="UCSC" id="uc012gvn.1">
    <molecule id="Q9QXN3-1"/>
    <property type="organism name" value="mouse"/>
</dbReference>
<dbReference type="AGR" id="MGI:1928469"/>
<dbReference type="CTD" id="9325"/>
<dbReference type="MGI" id="MGI:1928469">
    <property type="gene designation" value="Trip4"/>
</dbReference>
<dbReference type="VEuPathDB" id="HostDB:ENSMUSG00000032386"/>
<dbReference type="eggNOG" id="KOG2845">
    <property type="taxonomic scope" value="Eukaryota"/>
</dbReference>
<dbReference type="GeneTree" id="ENSGT00390000005300"/>
<dbReference type="HOGENOM" id="CLU_025737_1_0_1"/>
<dbReference type="InParanoid" id="Q9QXN3"/>
<dbReference type="OMA" id="EFNSYRH"/>
<dbReference type="OrthoDB" id="338816at2759"/>
<dbReference type="PhylomeDB" id="Q9QXN3"/>
<dbReference type="TreeFam" id="TF314842"/>
<dbReference type="BioGRID-ORCS" id="56404">
    <property type="hits" value="2 hits in 79 CRISPR screens"/>
</dbReference>
<dbReference type="ChiTaRS" id="Trip4">
    <property type="organism name" value="mouse"/>
</dbReference>
<dbReference type="PRO" id="PR:Q9QXN3"/>
<dbReference type="Proteomes" id="UP000000589">
    <property type="component" value="Chromosome 9"/>
</dbReference>
<dbReference type="RNAct" id="Q9QXN3">
    <property type="molecule type" value="protein"/>
</dbReference>
<dbReference type="Bgee" id="ENSMUSG00000032386">
    <property type="expression patterns" value="Expressed in pineal body and 266 other cell types or tissues"/>
</dbReference>
<dbReference type="ExpressionAtlas" id="Q9QXN3">
    <property type="expression patterns" value="baseline and differential"/>
</dbReference>
<dbReference type="GO" id="GO:0005813">
    <property type="term" value="C:centrosome"/>
    <property type="evidence" value="ECO:0007669"/>
    <property type="project" value="UniProtKB-SubCell"/>
</dbReference>
<dbReference type="GO" id="GO:0005829">
    <property type="term" value="C:cytosol"/>
    <property type="evidence" value="ECO:0007669"/>
    <property type="project" value="UniProtKB-SubCell"/>
</dbReference>
<dbReference type="GO" id="GO:0031594">
    <property type="term" value="C:neuromuscular junction"/>
    <property type="evidence" value="ECO:0000250"/>
    <property type="project" value="UniProtKB"/>
</dbReference>
<dbReference type="GO" id="GO:0016604">
    <property type="term" value="C:nuclear body"/>
    <property type="evidence" value="ECO:0007669"/>
    <property type="project" value="Ensembl"/>
</dbReference>
<dbReference type="GO" id="GO:0005634">
    <property type="term" value="C:nucleus"/>
    <property type="evidence" value="ECO:0000250"/>
    <property type="project" value="UniProtKB"/>
</dbReference>
<dbReference type="GO" id="GO:0180022">
    <property type="term" value="C:RQC-trigger complex"/>
    <property type="evidence" value="ECO:0007669"/>
    <property type="project" value="Ensembl"/>
</dbReference>
<dbReference type="GO" id="GO:0035035">
    <property type="term" value="F:histone acetyltransferase binding"/>
    <property type="evidence" value="ECO:0000250"/>
    <property type="project" value="UniProtKB"/>
</dbReference>
<dbReference type="GO" id="GO:0030331">
    <property type="term" value="F:nuclear estrogen receptor binding"/>
    <property type="evidence" value="ECO:0000250"/>
    <property type="project" value="UniProtKB"/>
</dbReference>
<dbReference type="GO" id="GO:0016922">
    <property type="term" value="F:nuclear receptor binding"/>
    <property type="evidence" value="ECO:0000250"/>
    <property type="project" value="UniProtKB"/>
</dbReference>
<dbReference type="GO" id="GO:0002020">
    <property type="term" value="F:protease binding"/>
    <property type="evidence" value="ECO:0007669"/>
    <property type="project" value="Ensembl"/>
</dbReference>
<dbReference type="GO" id="GO:0019901">
    <property type="term" value="F:protein kinase binding"/>
    <property type="evidence" value="ECO:0007669"/>
    <property type="project" value="Ensembl"/>
</dbReference>
<dbReference type="GO" id="GO:0003713">
    <property type="term" value="F:transcription coactivator activity"/>
    <property type="evidence" value="ECO:0000250"/>
    <property type="project" value="UniProtKB"/>
</dbReference>
<dbReference type="GO" id="GO:0044389">
    <property type="term" value="F:ubiquitin-like protein ligase binding"/>
    <property type="evidence" value="ECO:0000250"/>
    <property type="project" value="UniProtKB"/>
</dbReference>
<dbReference type="GO" id="GO:0008270">
    <property type="term" value="F:zinc ion binding"/>
    <property type="evidence" value="ECO:0007669"/>
    <property type="project" value="UniProtKB-KW"/>
</dbReference>
<dbReference type="GO" id="GO:0030520">
    <property type="term" value="P:estrogen receptor signaling pathway"/>
    <property type="evidence" value="ECO:0000250"/>
    <property type="project" value="UniProtKB"/>
</dbReference>
<dbReference type="GO" id="GO:0045893">
    <property type="term" value="P:positive regulation of DNA-templated transcription"/>
    <property type="evidence" value="ECO:0000250"/>
    <property type="project" value="UniProtKB"/>
</dbReference>
<dbReference type="GO" id="GO:0045661">
    <property type="term" value="P:regulation of myoblast differentiation"/>
    <property type="evidence" value="ECO:0000315"/>
    <property type="project" value="UniProtKB"/>
</dbReference>
<dbReference type="GO" id="GO:0072344">
    <property type="term" value="P:rescue of stalled ribosome"/>
    <property type="evidence" value="ECO:0000250"/>
    <property type="project" value="UniProtKB"/>
</dbReference>
<dbReference type="GO" id="GO:0032790">
    <property type="term" value="P:ribosome disassembly"/>
    <property type="evidence" value="ECO:0000250"/>
    <property type="project" value="UniProtKB"/>
</dbReference>
<dbReference type="GO" id="GO:1990116">
    <property type="term" value="P:ribosome-associated ubiquitin-dependent protein catabolic process"/>
    <property type="evidence" value="ECO:0000250"/>
    <property type="project" value="UniProtKB"/>
</dbReference>
<dbReference type="CDD" id="cd06554">
    <property type="entry name" value="ASCH_ASC-1_like"/>
    <property type="match status" value="1"/>
</dbReference>
<dbReference type="FunFam" id="2.30.130.30:FF:000004">
    <property type="entry name" value="Activating signal cointegrator 1"/>
    <property type="match status" value="1"/>
</dbReference>
<dbReference type="Gene3D" id="2.30.130.30">
    <property type="entry name" value="Hypothetical protein"/>
    <property type="match status" value="1"/>
</dbReference>
<dbReference type="InterPro" id="IPR007374">
    <property type="entry name" value="ASCH_domain"/>
</dbReference>
<dbReference type="InterPro" id="IPR015947">
    <property type="entry name" value="PUA-like_sf"/>
</dbReference>
<dbReference type="InterPro" id="IPR056994">
    <property type="entry name" value="TRI4_N"/>
</dbReference>
<dbReference type="InterPro" id="IPR039128">
    <property type="entry name" value="TRIP4-like"/>
</dbReference>
<dbReference type="InterPro" id="IPR009349">
    <property type="entry name" value="TRIP4/RQT4_C2HC5_Znf"/>
</dbReference>
<dbReference type="InterPro" id="IPR056993">
    <property type="entry name" value="TRIP4_3rd_dom"/>
</dbReference>
<dbReference type="PANTHER" id="PTHR12963:SF0">
    <property type="entry name" value="EXPRESSED PROTEIN"/>
    <property type="match status" value="1"/>
</dbReference>
<dbReference type="PANTHER" id="PTHR12963">
    <property type="entry name" value="THYROID RECEPTOR INTERACTING PROTEIN RELATED"/>
    <property type="match status" value="1"/>
</dbReference>
<dbReference type="Pfam" id="PF04266">
    <property type="entry name" value="ASCH"/>
    <property type="match status" value="1"/>
</dbReference>
<dbReference type="Pfam" id="PF23135">
    <property type="entry name" value="TRI4_N"/>
    <property type="match status" value="1"/>
</dbReference>
<dbReference type="Pfam" id="PF23134">
    <property type="entry name" value="TRIP4_3rd"/>
    <property type="match status" value="1"/>
</dbReference>
<dbReference type="Pfam" id="PF06221">
    <property type="entry name" value="zf-C2HC5"/>
    <property type="match status" value="1"/>
</dbReference>
<dbReference type="SMART" id="SM01022">
    <property type="entry name" value="ASCH"/>
    <property type="match status" value="1"/>
</dbReference>
<dbReference type="SUPFAM" id="SSF88697">
    <property type="entry name" value="PUA domain-like"/>
    <property type="match status" value="1"/>
</dbReference>
<sequence length="581" mass="66197">MAVAGAAYREPLVHWCTQQLQKTFALDVSEEIIQYVLSIENAEEIREYVTDLLQGNEGKKGQFIEDLITKWQKNDQEFISDSFQQCLRKDEILDGQRSVDQLKRSRRKGRNKQEVPAFPEPDVAVEVKTPLDLAKAQESNNSVKKKTRFVNLYTREGQDKLAVLLPGRHPCDCLGQKHKLINNCLVCGRIVCEQEGSGPCLFCGSLVCTNEEQDILQRDSNKSQKLLKKLMSGAETSGKVDVSTKDLLPHQESRMKSGLEKAIKHKEKLLEFDRTSIRRTQVIDDESDYFASDSNQWLSKVEREMLQKREEELRELRHASRLSKKVTIDFAGRKILEDENPLAEYHSRLDETIQAIASGTLNQSLVTLDRSCEEPLGVLVNPNMYQASPQWVDNTGSTPQKKTSLSAGPRLEPSLHQHQLRIQDQEFQEGFDGGWCLSMHQPWASLLVRGIKRVEGRSWYTPHRGRLWIAATGKRPSPQEVSELQATYRLLRGKDVEFPNDYPSGCLLGCVDLIDCLSQKQFQEQFPDISQESDSSFVFICKNPQEMVVKFPIKGNPKIWKLDSKIHQGAKKGLMKQNKAV</sequence>
<comment type="function">
    <text evidence="2 5 6 9">Transcription coactivator which associates with nuclear receptors, transcriptional coactivators including EP300, CREBBP and NCOA1, and basal transcription factors like TBP and TFIIA to facilitate nuclear receptors-mediated transcription. May thereby play an important role in establishing distinct coactivator complexes under different cellular conditions. Plays a role in thyroid hormone receptor and estrogen receptor transactivation (By similarity). Also involved in androgen receptor transactivation (PubMed:12077347). Plays a pivotal role in the transactivation of NF-kappa-B, SRF and AP1. Acts as a mediator of transrepression between nuclear receptor and either AP1 or NF-kappa-B. May play a role in the development of neuromuscular junction (By similarity). May play a role in late myogenic differentiation (PubMed:27008887). Also functions as part of the RQC trigger (RQT) complex that activates the ribosome quality control (RQC) pathway, a pathway that degrades nascent peptide chains during problematic translation (By similarity).</text>
</comment>
<comment type="subunit">
    <text evidence="2 5">Interacts with the thyroid hormone receptor/TR (via the ligand-binding domain); this interaction requires the presence of thyroid hormone (By similarity). Interacts with the androgen receptor/AR; in an androgen, testosterone and dihydrotestosterone-dependent manner (By similarity). Interacts with ESR1 (estrogen ligand-bound); competes with UFSP2 (By similarity). Interacts with UFSP2; competes with ligand-bound ESR1 (By similarity). Interacts with DDRGK1 and UFL1; the interaction with DDRGK1 is direct (By similarity). Interacts with NCOA1 (By similarity). Interacts with EP300 (By similarity). Part of the ASC-1 complex, that contains TRIP4, ASCC1, ASCC2 and ASCC3 (PubMed:12077347). Identified in the RQT (ribosome quality control trigger) complex, that contains ASCC2, ASCC3 and TRIP4 (By similarity). Interacts with NEK6 (By similarity). Interacts with CSRP1 (By similarity). Interacts with ZCCHC4 (By similarity).</text>
</comment>
<comment type="subcellular location">
    <subcellularLocation>
        <location evidence="2">Nucleus</location>
    </subcellularLocation>
    <subcellularLocation>
        <location evidence="2">Cytoplasm</location>
        <location evidence="2">Cytosol</location>
    </subcellularLocation>
    <subcellularLocation>
        <location evidence="2">Cytoplasm</location>
        <location evidence="2">Cytoskeleton</location>
        <location evidence="2">Microtubule organizing center</location>
        <location evidence="2">Centrosome</location>
    </subcellularLocation>
    <text evidence="2">Cytoplasmic under conditions of serum deprivation. Colocalizes with NEK6 in the centrosome.</text>
</comment>
<comment type="alternative products">
    <event type="alternative splicing"/>
    <isoform>
        <id>Q9QXN3-1</id>
        <name>1</name>
        <sequence type="displayed"/>
    </isoform>
    <isoform>
        <id>Q9QXN3-2</id>
        <name>2</name>
        <sequence type="described" ref="VSP_011109 VSP_011110"/>
    </isoform>
</comment>
<comment type="tissue specificity">
    <text evidence="6 8 9">Ubiquitously expressed (PubMed:12390891). Expressed in the spinal cord, brain, paraspinal ganglia, thyroid, and submandibular glands (PubMed:26924529). Expressed at low level in all the muscles (at protein level) but with higher expression in axial than in limb muscles (PubMed:27008887).</text>
</comment>
<comment type="developmental stage">
    <text evidence="8">Expressed in 17.5-day-old embryos.</text>
</comment>
<comment type="domain">
    <text evidence="2">The C4-type zinc finger mediates a competitive interaction with UFSP2 and ligand-bound nuclear receptors. It also mediates interaction with the transcriptional coactivators and the basal transcription machinery.</text>
</comment>
<comment type="PTM">
    <text evidence="1">Phosphorylated by NEK6.</text>
</comment>
<comment type="PTM">
    <text evidence="2 7">Polyufmylated by the UFM1-conjugating system composed of the enzymes UBA5, UFC1 and UFL1. Deufmylated by the protease UFSP2. Ufmylation of TRIP4 is promoted by ligand-bound nuclear receptors that compete with UFSP2 for interaction with TRIP4. Nuclear receptors-induced ufmylation promotes the recruitment of additional transcriptional coactivators like EP300 and NCOA1 and therefore the assembly of a coactivator complex facilitating nuclear receptor-mediated transcription.</text>
</comment>
<reference key="1">
    <citation type="journal article" date="2002" name="Mol. Cell. Biol.">
        <title>Novel transcription coactivator complex containing activating signal cointegrator 1.</title>
        <authorList>
            <person name="Jung D.-J."/>
            <person name="Sung H.-S."/>
            <person name="Goo Y.-W."/>
            <person name="Lee H.M."/>
            <person name="Park O.K."/>
            <person name="Jung S.-Y."/>
            <person name="Lim J."/>
            <person name="Kim H.-J."/>
            <person name="Lee S.-K."/>
            <person name="Kim T.S."/>
            <person name="Lee J.W."/>
            <person name="Lee Y.C."/>
        </authorList>
    </citation>
    <scope>NUCLEOTIDE SEQUENCE [MRNA] (ISOFORM 1)</scope>
    <scope>IDENTIFICATION OF THE ASC-1 COMPLEX</scope>
    <source>
        <tissue>Liver</tissue>
    </source>
</reference>
<reference key="2">
    <citation type="journal article" date="2002" name="Biol. Reprod.">
        <title>Activating signal cointegrator 1 is highly expressed in murine testicular Leydig cells and enhances the ligand-dependent transactivation of androgen receptor.</title>
        <authorList>
            <person name="Lee Y.S."/>
            <person name="Kim H.-J."/>
            <person name="Lee H.J."/>
            <person name="Lee J.W."/>
            <person name="Chun S.-Y."/>
            <person name="Ko S.-K."/>
            <person name="Lee K."/>
        </authorList>
    </citation>
    <scope>NUCLEOTIDE SEQUENCE [MRNA] (ISOFORM 1)</scope>
    <scope>FUNCTION</scope>
    <scope>TISSUE SPECIFICITY</scope>
    <source>
        <strain>CD-1</strain>
        <tissue>Testis</tissue>
    </source>
</reference>
<reference key="3">
    <citation type="journal article" date="2005" name="Science">
        <title>The transcriptional landscape of the mammalian genome.</title>
        <authorList>
            <person name="Carninci P."/>
            <person name="Kasukawa T."/>
            <person name="Katayama S."/>
            <person name="Gough J."/>
            <person name="Frith M.C."/>
            <person name="Maeda N."/>
            <person name="Oyama R."/>
            <person name="Ravasi T."/>
            <person name="Lenhard B."/>
            <person name="Wells C."/>
            <person name="Kodzius R."/>
            <person name="Shimokawa K."/>
            <person name="Bajic V.B."/>
            <person name="Brenner S.E."/>
            <person name="Batalov S."/>
            <person name="Forrest A.R."/>
            <person name="Zavolan M."/>
            <person name="Davis M.J."/>
            <person name="Wilming L.G."/>
            <person name="Aidinis V."/>
            <person name="Allen J.E."/>
            <person name="Ambesi-Impiombato A."/>
            <person name="Apweiler R."/>
            <person name="Aturaliya R.N."/>
            <person name="Bailey T.L."/>
            <person name="Bansal M."/>
            <person name="Baxter L."/>
            <person name="Beisel K.W."/>
            <person name="Bersano T."/>
            <person name="Bono H."/>
            <person name="Chalk A.M."/>
            <person name="Chiu K.P."/>
            <person name="Choudhary V."/>
            <person name="Christoffels A."/>
            <person name="Clutterbuck D.R."/>
            <person name="Crowe M.L."/>
            <person name="Dalla E."/>
            <person name="Dalrymple B.P."/>
            <person name="de Bono B."/>
            <person name="Della Gatta G."/>
            <person name="di Bernardo D."/>
            <person name="Down T."/>
            <person name="Engstrom P."/>
            <person name="Fagiolini M."/>
            <person name="Faulkner G."/>
            <person name="Fletcher C.F."/>
            <person name="Fukushima T."/>
            <person name="Furuno M."/>
            <person name="Futaki S."/>
            <person name="Gariboldi M."/>
            <person name="Georgii-Hemming P."/>
            <person name="Gingeras T.R."/>
            <person name="Gojobori T."/>
            <person name="Green R.E."/>
            <person name="Gustincich S."/>
            <person name="Harbers M."/>
            <person name="Hayashi Y."/>
            <person name="Hensch T.K."/>
            <person name="Hirokawa N."/>
            <person name="Hill D."/>
            <person name="Huminiecki L."/>
            <person name="Iacono M."/>
            <person name="Ikeo K."/>
            <person name="Iwama A."/>
            <person name="Ishikawa T."/>
            <person name="Jakt M."/>
            <person name="Kanapin A."/>
            <person name="Katoh M."/>
            <person name="Kawasawa Y."/>
            <person name="Kelso J."/>
            <person name="Kitamura H."/>
            <person name="Kitano H."/>
            <person name="Kollias G."/>
            <person name="Krishnan S.P."/>
            <person name="Kruger A."/>
            <person name="Kummerfeld S.K."/>
            <person name="Kurochkin I.V."/>
            <person name="Lareau L.F."/>
            <person name="Lazarevic D."/>
            <person name="Lipovich L."/>
            <person name="Liu J."/>
            <person name="Liuni S."/>
            <person name="McWilliam S."/>
            <person name="Madan Babu M."/>
            <person name="Madera M."/>
            <person name="Marchionni L."/>
            <person name="Matsuda H."/>
            <person name="Matsuzawa S."/>
            <person name="Miki H."/>
            <person name="Mignone F."/>
            <person name="Miyake S."/>
            <person name="Morris K."/>
            <person name="Mottagui-Tabar S."/>
            <person name="Mulder N."/>
            <person name="Nakano N."/>
            <person name="Nakauchi H."/>
            <person name="Ng P."/>
            <person name="Nilsson R."/>
            <person name="Nishiguchi S."/>
            <person name="Nishikawa S."/>
            <person name="Nori F."/>
            <person name="Ohara O."/>
            <person name="Okazaki Y."/>
            <person name="Orlando V."/>
            <person name="Pang K.C."/>
            <person name="Pavan W.J."/>
            <person name="Pavesi G."/>
            <person name="Pesole G."/>
            <person name="Petrovsky N."/>
            <person name="Piazza S."/>
            <person name="Reed J."/>
            <person name="Reid J.F."/>
            <person name="Ring B.Z."/>
            <person name="Ringwald M."/>
            <person name="Rost B."/>
            <person name="Ruan Y."/>
            <person name="Salzberg S.L."/>
            <person name="Sandelin A."/>
            <person name="Schneider C."/>
            <person name="Schoenbach C."/>
            <person name="Sekiguchi K."/>
            <person name="Semple C.A."/>
            <person name="Seno S."/>
            <person name="Sessa L."/>
            <person name="Sheng Y."/>
            <person name="Shibata Y."/>
            <person name="Shimada H."/>
            <person name="Shimada K."/>
            <person name="Silva D."/>
            <person name="Sinclair B."/>
            <person name="Sperling S."/>
            <person name="Stupka E."/>
            <person name="Sugiura K."/>
            <person name="Sultana R."/>
            <person name="Takenaka Y."/>
            <person name="Taki K."/>
            <person name="Tammoja K."/>
            <person name="Tan S.L."/>
            <person name="Tang S."/>
            <person name="Taylor M.S."/>
            <person name="Tegner J."/>
            <person name="Teichmann S.A."/>
            <person name="Ueda H.R."/>
            <person name="van Nimwegen E."/>
            <person name="Verardo R."/>
            <person name="Wei C.L."/>
            <person name="Yagi K."/>
            <person name="Yamanishi H."/>
            <person name="Zabarovsky E."/>
            <person name="Zhu S."/>
            <person name="Zimmer A."/>
            <person name="Hide W."/>
            <person name="Bult C."/>
            <person name="Grimmond S.M."/>
            <person name="Teasdale R.D."/>
            <person name="Liu E.T."/>
            <person name="Brusic V."/>
            <person name="Quackenbush J."/>
            <person name="Wahlestedt C."/>
            <person name="Mattick J.S."/>
            <person name="Hume D.A."/>
            <person name="Kai C."/>
            <person name="Sasaki D."/>
            <person name="Tomaru Y."/>
            <person name="Fukuda S."/>
            <person name="Kanamori-Katayama M."/>
            <person name="Suzuki M."/>
            <person name="Aoki J."/>
            <person name="Arakawa T."/>
            <person name="Iida J."/>
            <person name="Imamura K."/>
            <person name="Itoh M."/>
            <person name="Kato T."/>
            <person name="Kawaji H."/>
            <person name="Kawagashira N."/>
            <person name="Kawashima T."/>
            <person name="Kojima M."/>
            <person name="Kondo S."/>
            <person name="Konno H."/>
            <person name="Nakano K."/>
            <person name="Ninomiya N."/>
            <person name="Nishio T."/>
            <person name="Okada M."/>
            <person name="Plessy C."/>
            <person name="Shibata K."/>
            <person name="Shiraki T."/>
            <person name="Suzuki S."/>
            <person name="Tagami M."/>
            <person name="Waki K."/>
            <person name="Watahiki A."/>
            <person name="Okamura-Oho Y."/>
            <person name="Suzuki H."/>
            <person name="Kawai J."/>
            <person name="Hayashizaki Y."/>
        </authorList>
    </citation>
    <scope>NUCLEOTIDE SEQUENCE [LARGE SCALE MRNA] (ISOFORM 2)</scope>
    <source>
        <strain>C57BL/6J</strain>
        <tissue>Hypothalamus</tissue>
    </source>
</reference>
<reference key="4">
    <citation type="journal article" date="2009" name="PLoS Biol.">
        <title>Lineage-specific biology revealed by a finished genome assembly of the mouse.</title>
        <authorList>
            <person name="Church D.M."/>
            <person name="Goodstadt L."/>
            <person name="Hillier L.W."/>
            <person name="Zody M.C."/>
            <person name="Goldstein S."/>
            <person name="She X."/>
            <person name="Bult C.J."/>
            <person name="Agarwala R."/>
            <person name="Cherry J.L."/>
            <person name="DiCuccio M."/>
            <person name="Hlavina W."/>
            <person name="Kapustin Y."/>
            <person name="Meric P."/>
            <person name="Maglott D."/>
            <person name="Birtle Z."/>
            <person name="Marques A.C."/>
            <person name="Graves T."/>
            <person name="Zhou S."/>
            <person name="Teague B."/>
            <person name="Potamousis K."/>
            <person name="Churas C."/>
            <person name="Place M."/>
            <person name="Herschleb J."/>
            <person name="Runnheim R."/>
            <person name="Forrest D."/>
            <person name="Amos-Landgraf J."/>
            <person name="Schwartz D.C."/>
            <person name="Cheng Z."/>
            <person name="Lindblad-Toh K."/>
            <person name="Eichler E.E."/>
            <person name="Ponting C.P."/>
        </authorList>
    </citation>
    <scope>NUCLEOTIDE SEQUENCE [LARGE SCALE GENOMIC DNA]</scope>
    <source>
        <strain>C57BL/6J</strain>
    </source>
</reference>
<reference key="5">
    <citation type="journal article" date="2004" name="Genome Res.">
        <title>The status, quality, and expansion of the NIH full-length cDNA project: the Mammalian Gene Collection (MGC).</title>
        <authorList>
            <consortium name="The MGC Project Team"/>
        </authorList>
    </citation>
    <scope>NUCLEOTIDE SEQUENCE [LARGE SCALE MRNA] (ISOFORM 1)</scope>
    <source>
        <strain>FVB/N</strain>
        <tissue>Mammary tumor</tissue>
    </source>
</reference>
<reference key="6">
    <citation type="submission" date="2007-04" db="UniProtKB">
        <authorList>
            <person name="Lubec G."/>
            <person name="Kang S.U."/>
        </authorList>
    </citation>
    <scope>PROTEIN SEQUENCE OF 89-97</scope>
    <scope>IDENTIFICATION BY MASS SPECTROMETRY</scope>
    <source>
        <strain>C57BL/6J</strain>
        <tissue>Brain</tissue>
    </source>
</reference>
<reference key="7">
    <citation type="journal article" date="2007" name="J. Immunol.">
        <title>Quantitative time-resolved phosphoproteomic analysis of mast cell signaling.</title>
        <authorList>
            <person name="Cao L."/>
            <person name="Yu K."/>
            <person name="Banh C."/>
            <person name="Nguyen V."/>
            <person name="Ritz A."/>
            <person name="Raphael B.J."/>
            <person name="Kawakami Y."/>
            <person name="Kawakami T."/>
            <person name="Salomon A.R."/>
        </authorList>
    </citation>
    <scope>PHOSPHORYLATION [LARGE SCALE ANALYSIS] AT TYR-289</scope>
    <scope>IDENTIFICATION BY MASS SPECTROMETRY [LARGE SCALE ANALYSIS]</scope>
    <source>
        <tissue>Mast cell</tissue>
    </source>
</reference>
<reference key="8">
    <citation type="journal article" date="2011" name="PLoS ONE">
        <title>Ubiquitin fold modifier 1 (UFM1) and its target UFBP1 protect pancreatic beta cells from ER stress-induced apoptosis.</title>
        <authorList>
            <person name="Lemaire K."/>
            <person name="Moura R.F."/>
            <person name="Granvik M."/>
            <person name="Igoillo-Esteve M."/>
            <person name="Hohmeier H.E."/>
            <person name="Hendrickx N."/>
            <person name="Newgard C.B."/>
            <person name="Waelkens E."/>
            <person name="Cnop M."/>
            <person name="Schuit F."/>
        </authorList>
    </citation>
    <scope>UFMYLATION</scope>
</reference>
<reference key="9">
    <citation type="journal article" date="2016" name="Am. J. Hum. Genet.">
        <title>Mutations in subunits of the activating signal cointegrator 1 complex are associated with prenatal spinal muscular atrophy and congenital bone fractures.</title>
        <authorList>
            <person name="Knierim E."/>
            <person name="Hirata H."/>
            <person name="Wolf N.I."/>
            <person name="Morales-Gonzalez S."/>
            <person name="Schottmann G."/>
            <person name="Tanaka Y."/>
            <person name="Rudnik-Schoeneborn S."/>
            <person name="Orgeur M."/>
            <person name="Zerres K."/>
            <person name="Vogt S."/>
            <person name="van Riesen A."/>
            <person name="Gill E."/>
            <person name="Seifert F."/>
            <person name="Zwirner A."/>
            <person name="Kirschner J."/>
            <person name="Goebel H.H."/>
            <person name="Huebner C."/>
            <person name="Stricker S."/>
            <person name="Meierhofer D."/>
            <person name="Stenzel W."/>
            <person name="Schuelke M."/>
        </authorList>
    </citation>
    <scope>TISSUE SPECIFICITY</scope>
    <scope>DEVELOPMENTAL STAGE</scope>
</reference>
<reference key="10">
    <citation type="journal article" date="2016" name="Hum. Mol. Genet.">
        <title>The transcription coactivator ASC-1 is a regulator of skeletal myogenesis, and its deficiency causes a novel form of congenital muscle disease.</title>
        <authorList>
            <person name="Davignon L."/>
            <person name="Chauveau C."/>
            <person name="Julien C."/>
            <person name="Dill C."/>
            <person name="Duband-Goulet I."/>
            <person name="Cabet E."/>
            <person name="Buendia B."/>
            <person name="Lilienbaum A."/>
            <person name="Rendu J."/>
            <person name="Minot M.C."/>
            <person name="Guichet A."/>
            <person name="Allamand V."/>
            <person name="Vadrot N."/>
            <person name="Faure J."/>
            <person name="Odent S."/>
            <person name="Lazaro L."/>
            <person name="Leroy J.P."/>
            <person name="Marcorelles P."/>
            <person name="Dubourg O."/>
            <person name="Ferreiro A."/>
        </authorList>
    </citation>
    <scope>FUNCTION</scope>
    <scope>TISSUE SPECIFICITY</scope>
</reference>
<name>TRIP4_MOUSE</name>
<keyword id="KW-0007">Acetylation</keyword>
<keyword id="KW-0025">Alternative splicing</keyword>
<keyword id="KW-0963">Cytoplasm</keyword>
<keyword id="KW-0206">Cytoskeleton</keyword>
<keyword id="KW-0903">Direct protein sequencing</keyword>
<keyword id="KW-1017">Isopeptide bond</keyword>
<keyword id="KW-0479">Metal-binding</keyword>
<keyword id="KW-0539">Nucleus</keyword>
<keyword id="KW-0597">Phosphoprotein</keyword>
<keyword id="KW-1185">Reference proteome</keyword>
<keyword id="KW-0804">Transcription</keyword>
<keyword id="KW-0805">Transcription regulation</keyword>
<keyword id="KW-0832">Ubl conjugation</keyword>
<keyword id="KW-0862">Zinc</keyword>
<keyword id="KW-0863">Zinc-finger</keyword>
<proteinExistence type="evidence at protein level"/>
<evidence type="ECO:0000250" key="1"/>
<evidence type="ECO:0000250" key="2">
    <source>
        <dbReference type="UniProtKB" id="Q15650"/>
    </source>
</evidence>
<evidence type="ECO:0000255" key="3"/>
<evidence type="ECO:0000256" key="4">
    <source>
        <dbReference type="SAM" id="MobiDB-lite"/>
    </source>
</evidence>
<evidence type="ECO:0000269" key="5">
    <source>
    </source>
</evidence>
<evidence type="ECO:0000269" key="6">
    <source>
    </source>
</evidence>
<evidence type="ECO:0000269" key="7">
    <source>
    </source>
</evidence>
<evidence type="ECO:0000269" key="8">
    <source>
    </source>
</evidence>
<evidence type="ECO:0000269" key="9">
    <source>
    </source>
</evidence>
<evidence type="ECO:0000303" key="10">
    <source>
    </source>
</evidence>
<evidence type="ECO:0000303" key="11">
    <source>
    </source>
</evidence>
<evidence type="ECO:0000305" key="12"/>
<evidence type="ECO:0000312" key="13">
    <source>
        <dbReference type="MGI" id="MGI:1928469"/>
    </source>
</evidence>
<evidence type="ECO:0007744" key="14">
    <source>
    </source>
</evidence>
<feature type="initiator methionine" description="Removed" evidence="2">
    <location>
        <position position="1"/>
    </location>
</feature>
<feature type="chain" id="PRO_0000065632" description="Activating signal cointegrator 1">
    <location>
        <begin position="2"/>
        <end position="581"/>
    </location>
</feature>
<feature type="domain" description="ASCH" evidence="3">
    <location>
        <begin position="437"/>
        <end position="531"/>
    </location>
</feature>
<feature type="zinc finger region" description="C4-type">
    <location>
        <begin position="167"/>
        <end position="219"/>
    </location>
</feature>
<feature type="region of interest" description="Disordered" evidence="4">
    <location>
        <begin position="100"/>
        <end position="121"/>
    </location>
</feature>
<feature type="region of interest" description="Mediates interaction with DDRGK1" evidence="2">
    <location>
        <begin position="200"/>
        <end position="300"/>
    </location>
</feature>
<feature type="region of interest" description="Mediates interaction with UFL1" evidence="2">
    <location>
        <begin position="300"/>
        <end position="400"/>
    </location>
</feature>
<feature type="region of interest" description="Disordered" evidence="4">
    <location>
        <begin position="390"/>
        <end position="410"/>
    </location>
</feature>
<feature type="compositionally biased region" description="Polar residues" evidence="4">
    <location>
        <begin position="390"/>
        <end position="406"/>
    </location>
</feature>
<feature type="modified residue" description="N-acetylalanine" evidence="2">
    <location>
        <position position="2"/>
    </location>
</feature>
<feature type="modified residue" description="Phosphoserine" evidence="2">
    <location>
        <position position="276"/>
    </location>
</feature>
<feature type="modified residue" description="Phosphotyrosine" evidence="14">
    <location>
        <position position="289"/>
    </location>
</feature>
<feature type="cross-link" description="Glycyl lysine isopeptide (Lys-Gly) (interchain with G-Cter in UFM1)" evidence="2">
    <location>
        <position position="324"/>
    </location>
</feature>
<feature type="cross-link" description="Glycyl lysine isopeptide (Lys-Gly) (interchain with G-Cter in UFM1)" evidence="2">
    <location>
        <position position="334"/>
    </location>
</feature>
<feature type="splice variant" id="VSP_011109" description="In isoform 2." evidence="11">
    <original>FPDISQESDSSFVF</original>
    <variation>GNWIPRSIKEQRRG</variation>
    <location>
        <begin position="526"/>
        <end position="539"/>
    </location>
</feature>
<feature type="splice variant" id="VSP_011110" description="In isoform 2." evidence="11">
    <location>
        <begin position="540"/>
        <end position="581"/>
    </location>
</feature>
<feature type="sequence conflict" description="In Ref. 3; BAC30209." evidence="12" ref="3">
    <original>A</original>
    <variation>G</variation>
    <location>
        <position position="7"/>
    </location>
</feature>
<feature type="sequence conflict" description="In Ref. 1; AAF18440, 2; AAN23117 and 5; AAH21316." evidence="12" ref="1 2 5">
    <original>S</original>
    <variation>P</variation>
    <location>
        <position position="388"/>
    </location>
</feature>